<gene>
    <name evidence="2" type="primary">fmt</name>
    <name type="ordered locus">STY4390</name>
    <name type="ordered locus">t4097</name>
</gene>
<proteinExistence type="inferred from homology"/>
<sequence length="315" mass="34043">MSDSLRIIFAGTPDFAARHLDALLTSGHNIVGVFTQPDRPAGRGKKLMPSPVKVLAEEKGLPVFQPVSLRPQENQHLVADLHADVMVVVAYGLILPKAVLDMPRLGCINVHGSLLPRWRGAAPIQRSLWAGDAETGVTIMQMDVGLDTGDMLYKLACPITAEDTSGSLYNKLAELGPQGLITTLKQLADGTATPEAQNEALVTHAEKLSKEEARIDWSLSAAQLERCIRAFNPWPMSWLEIDGQPVKVWQASVIEDATQSLPGTILAATKQGIQVATGKGILNLLSLQPAGKKAMSAQDLLNSRREWFIPGNRLA</sequence>
<accession>Q8Z1X0</accession>
<organism>
    <name type="scientific">Salmonella typhi</name>
    <dbReference type="NCBI Taxonomy" id="90370"/>
    <lineage>
        <taxon>Bacteria</taxon>
        <taxon>Pseudomonadati</taxon>
        <taxon>Pseudomonadota</taxon>
        <taxon>Gammaproteobacteria</taxon>
        <taxon>Enterobacterales</taxon>
        <taxon>Enterobacteriaceae</taxon>
        <taxon>Salmonella</taxon>
    </lineage>
</organism>
<comment type="function">
    <text evidence="2">Attaches a formyl group to the free amino group of methionyl-tRNA(fMet). The formyl group appears to play a dual role in the initiator identity of N-formylmethionyl-tRNA by promoting its recognition by IF2 and preventing the misappropriation of this tRNA by the elongation apparatus.</text>
</comment>
<comment type="catalytic activity">
    <reaction evidence="2">
        <text>L-methionyl-tRNA(fMet) + (6R)-10-formyltetrahydrofolate = N-formyl-L-methionyl-tRNA(fMet) + (6S)-5,6,7,8-tetrahydrofolate + H(+)</text>
        <dbReference type="Rhea" id="RHEA:24380"/>
        <dbReference type="Rhea" id="RHEA-COMP:9952"/>
        <dbReference type="Rhea" id="RHEA-COMP:9953"/>
        <dbReference type="ChEBI" id="CHEBI:15378"/>
        <dbReference type="ChEBI" id="CHEBI:57453"/>
        <dbReference type="ChEBI" id="CHEBI:78530"/>
        <dbReference type="ChEBI" id="CHEBI:78844"/>
        <dbReference type="ChEBI" id="CHEBI:195366"/>
        <dbReference type="EC" id="2.1.2.9"/>
    </reaction>
</comment>
<comment type="domain">
    <text>Composed of an N- and a C-terminal domain. The N-terminal domain carries the tetrahydrofolate (THF)-binding site and the C-terminal domain is presumably involved in positioning the Met-tRNA substrate for the formylation reaction.</text>
</comment>
<comment type="similarity">
    <text evidence="2 3">Belongs to the Fmt family.</text>
</comment>
<name>FMT_SALTI</name>
<evidence type="ECO:0000250" key="1"/>
<evidence type="ECO:0000255" key="2">
    <source>
        <dbReference type="HAMAP-Rule" id="MF_00182"/>
    </source>
</evidence>
<evidence type="ECO:0000305" key="3"/>
<reference key="1">
    <citation type="journal article" date="2001" name="Nature">
        <title>Complete genome sequence of a multiple drug resistant Salmonella enterica serovar Typhi CT18.</title>
        <authorList>
            <person name="Parkhill J."/>
            <person name="Dougan G."/>
            <person name="James K.D."/>
            <person name="Thomson N.R."/>
            <person name="Pickard D."/>
            <person name="Wain J."/>
            <person name="Churcher C.M."/>
            <person name="Mungall K.L."/>
            <person name="Bentley S.D."/>
            <person name="Holden M.T.G."/>
            <person name="Sebaihia M."/>
            <person name="Baker S."/>
            <person name="Basham D."/>
            <person name="Brooks K."/>
            <person name="Chillingworth T."/>
            <person name="Connerton P."/>
            <person name="Cronin A."/>
            <person name="Davis P."/>
            <person name="Davies R.M."/>
            <person name="Dowd L."/>
            <person name="White N."/>
            <person name="Farrar J."/>
            <person name="Feltwell T."/>
            <person name="Hamlin N."/>
            <person name="Haque A."/>
            <person name="Hien T.T."/>
            <person name="Holroyd S."/>
            <person name="Jagels K."/>
            <person name="Krogh A."/>
            <person name="Larsen T.S."/>
            <person name="Leather S."/>
            <person name="Moule S."/>
            <person name="O'Gaora P."/>
            <person name="Parry C."/>
            <person name="Quail M.A."/>
            <person name="Rutherford K.M."/>
            <person name="Simmonds M."/>
            <person name="Skelton J."/>
            <person name="Stevens K."/>
            <person name="Whitehead S."/>
            <person name="Barrell B.G."/>
        </authorList>
    </citation>
    <scope>NUCLEOTIDE SEQUENCE [LARGE SCALE GENOMIC DNA]</scope>
    <source>
        <strain>CT18</strain>
    </source>
</reference>
<reference key="2">
    <citation type="journal article" date="2003" name="J. Bacteriol.">
        <title>Comparative genomics of Salmonella enterica serovar Typhi strains Ty2 and CT18.</title>
        <authorList>
            <person name="Deng W."/>
            <person name="Liou S.-R."/>
            <person name="Plunkett G. III"/>
            <person name="Mayhew G.F."/>
            <person name="Rose D.J."/>
            <person name="Burland V."/>
            <person name="Kodoyianni V."/>
            <person name="Schwartz D.C."/>
            <person name="Blattner F.R."/>
        </authorList>
    </citation>
    <scope>NUCLEOTIDE SEQUENCE [LARGE SCALE GENOMIC DNA]</scope>
    <source>
        <strain>ATCC 700931 / Ty2</strain>
    </source>
</reference>
<feature type="initiator methionine" description="Removed" evidence="1">
    <location>
        <position position="1"/>
    </location>
</feature>
<feature type="chain" id="PRO_0000083040" description="Methionyl-tRNA formyltransferase">
    <location>
        <begin position="2"/>
        <end position="315"/>
    </location>
</feature>
<feature type="region of interest" description="N-terminal domain">
    <location>
        <begin position="2"/>
        <end position="189"/>
    </location>
</feature>
<feature type="region of interest" description="C-terminal domain">
    <location>
        <begin position="210"/>
        <end position="315"/>
    </location>
</feature>
<feature type="binding site" evidence="2">
    <location>
        <begin position="113"/>
        <end position="116"/>
    </location>
    <ligand>
        <name>(6S)-5,6,7,8-tetrahydrofolate</name>
        <dbReference type="ChEBI" id="CHEBI:57453"/>
    </ligand>
</feature>
<keyword id="KW-0648">Protein biosynthesis</keyword>
<keyword id="KW-0808">Transferase</keyword>
<dbReference type="EC" id="2.1.2.9" evidence="2"/>
<dbReference type="EMBL" id="AL513382">
    <property type="protein sequence ID" value="CAD09178.1"/>
    <property type="molecule type" value="Genomic_DNA"/>
</dbReference>
<dbReference type="EMBL" id="AE014613">
    <property type="protein sequence ID" value="AAO71564.1"/>
    <property type="molecule type" value="Genomic_DNA"/>
</dbReference>
<dbReference type="RefSeq" id="NP_458492.1">
    <property type="nucleotide sequence ID" value="NC_003198.1"/>
</dbReference>
<dbReference type="RefSeq" id="WP_001285161.1">
    <property type="nucleotide sequence ID" value="NZ_WSUR01000046.1"/>
</dbReference>
<dbReference type="SMR" id="Q8Z1X0"/>
<dbReference type="STRING" id="220341.gene:17588218"/>
<dbReference type="KEGG" id="stt:t4097"/>
<dbReference type="KEGG" id="sty:STY4390"/>
<dbReference type="PATRIC" id="fig|220341.7.peg.4486"/>
<dbReference type="eggNOG" id="COG0223">
    <property type="taxonomic scope" value="Bacteria"/>
</dbReference>
<dbReference type="HOGENOM" id="CLU_033347_1_2_6"/>
<dbReference type="OMA" id="GITTMLM"/>
<dbReference type="OrthoDB" id="9802815at2"/>
<dbReference type="Proteomes" id="UP000000541">
    <property type="component" value="Chromosome"/>
</dbReference>
<dbReference type="Proteomes" id="UP000002670">
    <property type="component" value="Chromosome"/>
</dbReference>
<dbReference type="GO" id="GO:0005829">
    <property type="term" value="C:cytosol"/>
    <property type="evidence" value="ECO:0007669"/>
    <property type="project" value="TreeGrafter"/>
</dbReference>
<dbReference type="GO" id="GO:0004479">
    <property type="term" value="F:methionyl-tRNA formyltransferase activity"/>
    <property type="evidence" value="ECO:0007669"/>
    <property type="project" value="UniProtKB-UniRule"/>
</dbReference>
<dbReference type="CDD" id="cd08646">
    <property type="entry name" value="FMT_core_Met-tRNA-FMT_N"/>
    <property type="match status" value="1"/>
</dbReference>
<dbReference type="CDD" id="cd08704">
    <property type="entry name" value="Met_tRNA_FMT_C"/>
    <property type="match status" value="1"/>
</dbReference>
<dbReference type="FunFam" id="3.10.25.10:FF:000001">
    <property type="entry name" value="Methionyl-tRNA formyltransferase"/>
    <property type="match status" value="1"/>
</dbReference>
<dbReference type="FunFam" id="3.40.50.12230:FF:000001">
    <property type="entry name" value="Methionyl-tRNA formyltransferase"/>
    <property type="match status" value="1"/>
</dbReference>
<dbReference type="FunFam" id="3.40.50.170:FF:000003">
    <property type="entry name" value="Methionyl-tRNA formyltransferase"/>
    <property type="match status" value="1"/>
</dbReference>
<dbReference type="Gene3D" id="3.10.25.10">
    <property type="entry name" value="Formyl transferase, C-terminal domain"/>
    <property type="match status" value="1"/>
</dbReference>
<dbReference type="Gene3D" id="3.40.50.170">
    <property type="entry name" value="Formyl transferase, N-terminal domain"/>
    <property type="match status" value="1"/>
</dbReference>
<dbReference type="HAMAP" id="MF_00182">
    <property type="entry name" value="Formyl_trans"/>
    <property type="match status" value="1"/>
</dbReference>
<dbReference type="InterPro" id="IPR005794">
    <property type="entry name" value="Fmt"/>
</dbReference>
<dbReference type="InterPro" id="IPR005793">
    <property type="entry name" value="Formyl_trans_C"/>
</dbReference>
<dbReference type="InterPro" id="IPR037022">
    <property type="entry name" value="Formyl_trans_C_sf"/>
</dbReference>
<dbReference type="InterPro" id="IPR002376">
    <property type="entry name" value="Formyl_transf_N"/>
</dbReference>
<dbReference type="InterPro" id="IPR036477">
    <property type="entry name" value="Formyl_transf_N_sf"/>
</dbReference>
<dbReference type="InterPro" id="IPR011034">
    <property type="entry name" value="Formyl_transferase-like_C_sf"/>
</dbReference>
<dbReference type="InterPro" id="IPR001555">
    <property type="entry name" value="GART_AS"/>
</dbReference>
<dbReference type="InterPro" id="IPR044135">
    <property type="entry name" value="Met-tRNA-FMT_C"/>
</dbReference>
<dbReference type="InterPro" id="IPR041711">
    <property type="entry name" value="Met-tRNA-FMT_N"/>
</dbReference>
<dbReference type="NCBIfam" id="TIGR00460">
    <property type="entry name" value="fmt"/>
    <property type="match status" value="1"/>
</dbReference>
<dbReference type="PANTHER" id="PTHR11138">
    <property type="entry name" value="METHIONYL-TRNA FORMYLTRANSFERASE"/>
    <property type="match status" value="1"/>
</dbReference>
<dbReference type="PANTHER" id="PTHR11138:SF5">
    <property type="entry name" value="METHIONYL-TRNA FORMYLTRANSFERASE, MITOCHONDRIAL"/>
    <property type="match status" value="1"/>
</dbReference>
<dbReference type="Pfam" id="PF02911">
    <property type="entry name" value="Formyl_trans_C"/>
    <property type="match status" value="1"/>
</dbReference>
<dbReference type="Pfam" id="PF00551">
    <property type="entry name" value="Formyl_trans_N"/>
    <property type="match status" value="1"/>
</dbReference>
<dbReference type="SUPFAM" id="SSF50486">
    <property type="entry name" value="FMT C-terminal domain-like"/>
    <property type="match status" value="1"/>
</dbReference>
<dbReference type="SUPFAM" id="SSF53328">
    <property type="entry name" value="Formyltransferase"/>
    <property type="match status" value="1"/>
</dbReference>
<dbReference type="PROSITE" id="PS00373">
    <property type="entry name" value="GART"/>
    <property type="match status" value="1"/>
</dbReference>
<protein>
    <recommendedName>
        <fullName evidence="2">Methionyl-tRNA formyltransferase</fullName>
        <ecNumber evidence="2">2.1.2.9</ecNumber>
    </recommendedName>
</protein>